<feature type="chain" id="PRO_0000356771" description="Large ribosomal subunit protein bL33">
    <location>
        <begin position="1"/>
        <end position="62"/>
    </location>
</feature>
<reference key="1">
    <citation type="journal article" date="2015" name="Proc. Natl. Acad. Sci. U.S.A.">
        <title>Trichodesmium genome maintains abundant, widespread noncoding DNA in situ, despite oligotrophic lifestyle.</title>
        <authorList>
            <person name="Walworth N."/>
            <person name="Pfreundt U."/>
            <person name="Nelson W.C."/>
            <person name="Mincer T."/>
            <person name="Heidelberg J.F."/>
            <person name="Fu F."/>
            <person name="Waterbury J.B."/>
            <person name="Glavina del Rio T."/>
            <person name="Goodwin L."/>
            <person name="Kyrpides N.C."/>
            <person name="Land M.L."/>
            <person name="Woyke T."/>
            <person name="Hutchins D.A."/>
            <person name="Hess W.R."/>
            <person name="Webb E.A."/>
        </authorList>
    </citation>
    <scope>NUCLEOTIDE SEQUENCE [LARGE SCALE GENOMIC DNA]</scope>
    <source>
        <strain>IMS101</strain>
    </source>
</reference>
<evidence type="ECO:0000255" key="1">
    <source>
        <dbReference type="HAMAP-Rule" id="MF_00294"/>
    </source>
</evidence>
<evidence type="ECO:0000305" key="2"/>
<protein>
    <recommendedName>
        <fullName evidence="1">Large ribosomal subunit protein bL33</fullName>
    </recommendedName>
    <alternativeName>
        <fullName evidence="2">50S ribosomal protein L33</fullName>
    </alternativeName>
</protein>
<comment type="similarity">
    <text evidence="1">Belongs to the bacterial ribosomal protein bL33 family.</text>
</comment>
<proteinExistence type="inferred from homology"/>
<dbReference type="EMBL" id="CP000393">
    <property type="protein sequence ID" value="ABG52784.1"/>
    <property type="molecule type" value="Genomic_DNA"/>
</dbReference>
<dbReference type="RefSeq" id="WP_011613115.1">
    <property type="nucleotide sequence ID" value="NC_008312.1"/>
</dbReference>
<dbReference type="SMR" id="Q10Y90"/>
<dbReference type="STRING" id="203124.Tery_3728"/>
<dbReference type="KEGG" id="ter:Tery_3728"/>
<dbReference type="eggNOG" id="COG0267">
    <property type="taxonomic scope" value="Bacteria"/>
</dbReference>
<dbReference type="HOGENOM" id="CLU_190949_3_0_3"/>
<dbReference type="GO" id="GO:0005737">
    <property type="term" value="C:cytoplasm"/>
    <property type="evidence" value="ECO:0007669"/>
    <property type="project" value="UniProtKB-ARBA"/>
</dbReference>
<dbReference type="GO" id="GO:1990904">
    <property type="term" value="C:ribonucleoprotein complex"/>
    <property type="evidence" value="ECO:0007669"/>
    <property type="project" value="UniProtKB-KW"/>
</dbReference>
<dbReference type="GO" id="GO:0005840">
    <property type="term" value="C:ribosome"/>
    <property type="evidence" value="ECO:0007669"/>
    <property type="project" value="UniProtKB-KW"/>
</dbReference>
<dbReference type="GO" id="GO:0003735">
    <property type="term" value="F:structural constituent of ribosome"/>
    <property type="evidence" value="ECO:0007669"/>
    <property type="project" value="InterPro"/>
</dbReference>
<dbReference type="GO" id="GO:0006412">
    <property type="term" value="P:translation"/>
    <property type="evidence" value="ECO:0007669"/>
    <property type="project" value="UniProtKB-UniRule"/>
</dbReference>
<dbReference type="Gene3D" id="2.20.28.120">
    <property type="entry name" value="Ribosomal protein L33"/>
    <property type="match status" value="1"/>
</dbReference>
<dbReference type="HAMAP" id="MF_00294">
    <property type="entry name" value="Ribosomal_bL33"/>
    <property type="match status" value="1"/>
</dbReference>
<dbReference type="InterPro" id="IPR001705">
    <property type="entry name" value="Ribosomal_bL33"/>
</dbReference>
<dbReference type="InterPro" id="IPR018264">
    <property type="entry name" value="Ribosomal_bL33_CS"/>
</dbReference>
<dbReference type="InterPro" id="IPR038584">
    <property type="entry name" value="Ribosomal_bL33_sf"/>
</dbReference>
<dbReference type="InterPro" id="IPR011332">
    <property type="entry name" value="Ribosomal_zn-bd"/>
</dbReference>
<dbReference type="NCBIfam" id="NF001764">
    <property type="entry name" value="PRK00504.1"/>
    <property type="match status" value="1"/>
</dbReference>
<dbReference type="NCBIfam" id="NF001860">
    <property type="entry name" value="PRK00595.1"/>
    <property type="match status" value="1"/>
</dbReference>
<dbReference type="NCBIfam" id="TIGR01023">
    <property type="entry name" value="rpmG_bact"/>
    <property type="match status" value="1"/>
</dbReference>
<dbReference type="PANTHER" id="PTHR43168">
    <property type="entry name" value="50S RIBOSOMAL PROTEIN L33, CHLOROPLASTIC"/>
    <property type="match status" value="1"/>
</dbReference>
<dbReference type="PANTHER" id="PTHR43168:SF2">
    <property type="entry name" value="LARGE RIBOSOMAL SUBUNIT PROTEIN BL33C"/>
    <property type="match status" value="1"/>
</dbReference>
<dbReference type="Pfam" id="PF00471">
    <property type="entry name" value="Ribosomal_L33"/>
    <property type="match status" value="1"/>
</dbReference>
<dbReference type="SUPFAM" id="SSF57829">
    <property type="entry name" value="Zn-binding ribosomal proteins"/>
    <property type="match status" value="1"/>
</dbReference>
<dbReference type="PROSITE" id="PS00582">
    <property type="entry name" value="RIBOSOMAL_L33"/>
    <property type="match status" value="1"/>
</dbReference>
<organism>
    <name type="scientific">Trichodesmium erythraeum (strain IMS101)</name>
    <dbReference type="NCBI Taxonomy" id="203124"/>
    <lineage>
        <taxon>Bacteria</taxon>
        <taxon>Bacillati</taxon>
        <taxon>Cyanobacteriota</taxon>
        <taxon>Cyanophyceae</taxon>
        <taxon>Oscillatoriophycideae</taxon>
        <taxon>Oscillatoriales</taxon>
        <taxon>Microcoleaceae</taxon>
        <taxon>Trichodesmium</taxon>
    </lineage>
</organism>
<name>RL33_TRIEI</name>
<accession>Q10Y90</accession>
<sequence>MAKGVRIIITLECTECRTNPNKRSQGVSRYTSTKNRRNTTSRLELKKFCTHCNRHTVHKEIK</sequence>
<gene>
    <name evidence="1" type="primary">rpmG</name>
    <name evidence="1" type="synonym">rpl33</name>
    <name type="ordered locus">Tery_3728</name>
</gene>
<keyword id="KW-0687">Ribonucleoprotein</keyword>
<keyword id="KW-0689">Ribosomal protein</keyword>